<protein>
    <recommendedName>
        <fullName>L-seryl-tRNA(Sec) kinase</fullName>
        <ecNumber>2.7.1.164</ecNumber>
    </recommendedName>
    <alternativeName>
        <fullName>O-phosphoseryl-tRNA(Sec) kinase</fullName>
        <shortName>PSTK</shortName>
    </alternativeName>
</protein>
<comment type="function">
    <text evidence="2">Specifically phosphorylates seryl-tRNA(Sec) to O-phosphoseryl-tRNA(Sec), an activated intermediate for selenocysteine biosynthesis.</text>
</comment>
<comment type="catalytic activity">
    <reaction>
        <text>L-seryl-tRNA(Sec) + ATP = O-phospho-L-seryl-tRNA(Sec) + ADP</text>
        <dbReference type="Rhea" id="RHEA:25037"/>
        <dbReference type="Rhea" id="RHEA-COMP:9742"/>
        <dbReference type="Rhea" id="RHEA-COMP:9947"/>
        <dbReference type="ChEBI" id="CHEBI:30616"/>
        <dbReference type="ChEBI" id="CHEBI:78533"/>
        <dbReference type="ChEBI" id="CHEBI:78551"/>
        <dbReference type="ChEBI" id="CHEBI:456216"/>
        <dbReference type="EC" id="2.7.1.164"/>
    </reaction>
</comment>
<comment type="pathway">
    <text>Aminoacyl-tRNA biosynthesis; selenocysteinyl-tRNA(Sec) biosynthesis; selenocysteinyl-tRNA(Sec) from L-seryl-tRNA(Sec) (archaeal/eukaryal route): step 1/2.</text>
</comment>
<comment type="similarity">
    <text evidence="3">Belongs to the L-seryl-tRNA(Sec) kinase family.</text>
</comment>
<comment type="sequence caution" evidence="3">
    <conflict type="erroneous initiation">
        <sequence resource="EMBL-CDS" id="AAB99557"/>
    </conflict>
</comment>
<proteinExistence type="evidence at protein level"/>
<feature type="chain" id="PRO_0000107396" description="L-seryl-tRNA(Sec) kinase">
    <location>
        <begin position="1"/>
        <end position="248"/>
    </location>
</feature>
<feature type="binding site" evidence="1">
    <location>
        <begin position="7"/>
        <end position="14"/>
    </location>
    <ligand>
        <name>ATP</name>
        <dbReference type="ChEBI" id="CHEBI:30616"/>
    </ligand>
</feature>
<feature type="strand" evidence="4">
    <location>
        <begin position="1"/>
        <end position="6"/>
    </location>
</feature>
<feature type="helix" evidence="4">
    <location>
        <begin position="13"/>
        <end position="26"/>
    </location>
</feature>
<feature type="strand" evidence="4">
    <location>
        <begin position="31"/>
        <end position="34"/>
    </location>
</feature>
<feature type="helix" evidence="4">
    <location>
        <begin position="37"/>
        <end position="40"/>
    </location>
</feature>
<feature type="strand" evidence="4">
    <location>
        <begin position="43"/>
        <end position="45"/>
    </location>
</feature>
<feature type="helix" evidence="4">
    <location>
        <begin position="48"/>
        <end position="50"/>
    </location>
</feature>
<feature type="helix" evidence="4">
    <location>
        <begin position="51"/>
        <end position="66"/>
    </location>
</feature>
<feature type="strand" evidence="4">
    <location>
        <begin position="69"/>
        <end position="73"/>
    </location>
</feature>
<feature type="helix" evidence="4">
    <location>
        <begin position="80"/>
        <end position="92"/>
    </location>
</feature>
<feature type="strand" evidence="4">
    <location>
        <begin position="96"/>
        <end position="103"/>
    </location>
</feature>
<feature type="helix" evidence="4">
    <location>
        <begin position="106"/>
        <end position="115"/>
    </location>
</feature>
<feature type="helix" evidence="4">
    <location>
        <begin position="122"/>
        <end position="131"/>
    </location>
</feature>
<feature type="helix" evidence="4">
    <location>
        <begin position="140"/>
        <end position="142"/>
    </location>
</feature>
<feature type="strand" evidence="4">
    <location>
        <begin position="145"/>
        <end position="149"/>
    </location>
</feature>
<feature type="helix" evidence="4">
    <location>
        <begin position="156"/>
        <end position="167"/>
    </location>
</feature>
<feature type="strand" evidence="6">
    <location>
        <begin position="172"/>
        <end position="174"/>
    </location>
</feature>
<feature type="helix" evidence="4">
    <location>
        <begin position="186"/>
        <end position="205"/>
    </location>
</feature>
<feature type="helix" evidence="4">
    <location>
        <begin position="209"/>
        <end position="227"/>
    </location>
</feature>
<feature type="strand" evidence="5">
    <location>
        <begin position="229"/>
        <end position="231"/>
    </location>
</feature>
<feature type="helix" evidence="4">
    <location>
        <begin position="234"/>
        <end position="247"/>
    </location>
</feature>
<evidence type="ECO:0000255" key="1"/>
<evidence type="ECO:0000269" key="2">
    <source>
    </source>
</evidence>
<evidence type="ECO:0000305" key="3"/>
<evidence type="ECO:0007829" key="4">
    <source>
        <dbReference type="PDB" id="3A4M"/>
    </source>
</evidence>
<evidence type="ECO:0007829" key="5">
    <source>
        <dbReference type="PDB" id="3ADC"/>
    </source>
</evidence>
<evidence type="ECO:0007829" key="6">
    <source>
        <dbReference type="PDB" id="3ADD"/>
    </source>
</evidence>
<accession>Q58933</accession>
<sequence>MLIILTGLPGVGKSTFSKNLAKILSKNNIDVIVLGSDLIRESFPVWKEKYEEFIKKSTYRLIDSALKNYWVIVDDTNYYNSMRRDLINIAKKYNKNYAIIYLKASLDVLIRRNIERGEKIPNEVIKKMYEKFDEPGKKYKWDEPFLIIDTTKDIDFNEIAKKLIEKSKEIPKFYVLEENKNKNNNISDKIDKETRKIVSEYIKSKKLDKDKIKEVVELRKEFLKKIKKMEEVDADRVLKEFKDLLNSY</sequence>
<organism>
    <name type="scientific">Methanocaldococcus jannaschii (strain ATCC 43067 / DSM 2661 / JAL-1 / JCM 10045 / NBRC 100440)</name>
    <name type="common">Methanococcus jannaschii</name>
    <dbReference type="NCBI Taxonomy" id="243232"/>
    <lineage>
        <taxon>Archaea</taxon>
        <taxon>Methanobacteriati</taxon>
        <taxon>Methanobacteriota</taxon>
        <taxon>Methanomada group</taxon>
        <taxon>Methanococci</taxon>
        <taxon>Methanococcales</taxon>
        <taxon>Methanocaldococcaceae</taxon>
        <taxon>Methanocaldococcus</taxon>
    </lineage>
</organism>
<gene>
    <name type="primary">pstK</name>
    <name type="ordered locus">MJ1538</name>
</gene>
<dbReference type="EC" id="2.7.1.164"/>
<dbReference type="EMBL" id="L77117">
    <property type="protein sequence ID" value="AAB99557.1"/>
    <property type="status" value="ALT_INIT"/>
    <property type="molecule type" value="Genomic_DNA"/>
</dbReference>
<dbReference type="PIR" id="A64492">
    <property type="entry name" value="A64492"/>
</dbReference>
<dbReference type="RefSeq" id="WP_064496861.1">
    <property type="nucleotide sequence ID" value="NC_000909.1"/>
</dbReference>
<dbReference type="PDB" id="3A4L">
    <property type="method" value="X-ray"/>
    <property type="resolution" value="1.80 A"/>
    <property type="chains" value="A/B=1-248"/>
</dbReference>
<dbReference type="PDB" id="3A4M">
    <property type="method" value="X-ray"/>
    <property type="resolution" value="1.79 A"/>
    <property type="chains" value="A/B=1-248"/>
</dbReference>
<dbReference type="PDB" id="3A4N">
    <property type="method" value="X-ray"/>
    <property type="resolution" value="2.50 A"/>
    <property type="chains" value="A/B=1-248"/>
</dbReference>
<dbReference type="PDB" id="3ADB">
    <property type="method" value="X-ray"/>
    <property type="resolution" value="2.80 A"/>
    <property type="chains" value="A/B=1-248"/>
</dbReference>
<dbReference type="PDB" id="3ADC">
    <property type="method" value="X-ray"/>
    <property type="resolution" value="2.90 A"/>
    <property type="chains" value="A/B=1-248"/>
</dbReference>
<dbReference type="PDB" id="3ADD">
    <property type="method" value="X-ray"/>
    <property type="resolution" value="2.40 A"/>
    <property type="chains" value="A/B=1-248"/>
</dbReference>
<dbReference type="PDB" id="3AM1">
    <property type="method" value="X-ray"/>
    <property type="resolution" value="2.40 A"/>
    <property type="chains" value="A=1-248"/>
</dbReference>
<dbReference type="PDBsum" id="3A4L"/>
<dbReference type="PDBsum" id="3A4M"/>
<dbReference type="PDBsum" id="3A4N"/>
<dbReference type="PDBsum" id="3ADB"/>
<dbReference type="PDBsum" id="3ADC"/>
<dbReference type="PDBsum" id="3ADD"/>
<dbReference type="PDBsum" id="3AM1"/>
<dbReference type="SMR" id="Q58933"/>
<dbReference type="DIP" id="DIP-48971N"/>
<dbReference type="FunCoup" id="Q58933">
    <property type="interactions" value="45"/>
</dbReference>
<dbReference type="STRING" id="243232.MJ_1538"/>
<dbReference type="PaxDb" id="243232-MJ_1538"/>
<dbReference type="EnsemblBacteria" id="AAB99557">
    <property type="protein sequence ID" value="AAB99557"/>
    <property type="gene ID" value="MJ_1538"/>
</dbReference>
<dbReference type="GeneID" id="1452446"/>
<dbReference type="KEGG" id="mja:MJ_1538"/>
<dbReference type="eggNOG" id="arCOG01041">
    <property type="taxonomic scope" value="Archaea"/>
</dbReference>
<dbReference type="HOGENOM" id="CLU_1100964_0_0_2"/>
<dbReference type="InParanoid" id="Q58933"/>
<dbReference type="OrthoDB" id="28808at2157"/>
<dbReference type="PhylomeDB" id="Q58933"/>
<dbReference type="BioCyc" id="MetaCyc:MONOMER-14956"/>
<dbReference type="BRENDA" id="2.7.1.164">
    <property type="organism ID" value="3260"/>
</dbReference>
<dbReference type="UniPathway" id="UPA00906">
    <property type="reaction ID" value="UER00897"/>
</dbReference>
<dbReference type="EvolutionaryTrace" id="Q58933"/>
<dbReference type="Proteomes" id="UP000000805">
    <property type="component" value="Chromosome"/>
</dbReference>
<dbReference type="GO" id="GO:0005524">
    <property type="term" value="F:ATP binding"/>
    <property type="evidence" value="ECO:0007669"/>
    <property type="project" value="UniProtKB-KW"/>
</dbReference>
<dbReference type="GO" id="GO:0043915">
    <property type="term" value="F:L-seryl-tRNA(Sec) kinase activity"/>
    <property type="evidence" value="ECO:0007669"/>
    <property type="project" value="UniProtKB-EC"/>
</dbReference>
<dbReference type="GO" id="GO:0001717">
    <property type="term" value="P:conversion of seryl-tRNAsec to selenocys-tRNAsec"/>
    <property type="evidence" value="ECO:0007669"/>
    <property type="project" value="InterPro"/>
</dbReference>
<dbReference type="GO" id="GO:0002098">
    <property type="term" value="P:tRNA wobble uridine modification"/>
    <property type="evidence" value="ECO:0000318"/>
    <property type="project" value="GO_Central"/>
</dbReference>
<dbReference type="FunFam" id="3.40.50.300:FF:005686">
    <property type="entry name" value="L-seryl-tRNA(Sec) kinase"/>
    <property type="match status" value="1"/>
</dbReference>
<dbReference type="Gene3D" id="1.10.12.40">
    <property type="match status" value="1"/>
</dbReference>
<dbReference type="Gene3D" id="3.40.50.300">
    <property type="entry name" value="P-loop containing nucleotide triphosphate hydrolases"/>
    <property type="match status" value="1"/>
</dbReference>
<dbReference type="InterPro" id="IPR013641">
    <property type="entry name" value="KTI12/PSTK"/>
</dbReference>
<dbReference type="InterPro" id="IPR020024">
    <property type="entry name" value="L-seryl-tRNA_Sec_kinase_arc"/>
</dbReference>
<dbReference type="InterPro" id="IPR027417">
    <property type="entry name" value="P-loop_NTPase"/>
</dbReference>
<dbReference type="InterPro" id="IPR052648">
    <property type="entry name" value="Ser-tRNA(Sec)_kinase"/>
</dbReference>
<dbReference type="NCBIfam" id="TIGR03574">
    <property type="entry name" value="selen_PSTK"/>
    <property type="match status" value="1"/>
</dbReference>
<dbReference type="PANTHER" id="PTHR20873">
    <property type="entry name" value="L-SERYL-TRNA(SEC) KINASE"/>
    <property type="match status" value="1"/>
</dbReference>
<dbReference type="PANTHER" id="PTHR20873:SF0">
    <property type="entry name" value="L-SERYL-TRNA(SEC) KINASE"/>
    <property type="match status" value="1"/>
</dbReference>
<dbReference type="Pfam" id="PF08433">
    <property type="entry name" value="KTI12"/>
    <property type="match status" value="1"/>
</dbReference>
<dbReference type="SUPFAM" id="SSF52540">
    <property type="entry name" value="P-loop containing nucleoside triphosphate hydrolases"/>
    <property type="match status" value="1"/>
</dbReference>
<keyword id="KW-0002">3D-structure</keyword>
<keyword id="KW-0067">ATP-binding</keyword>
<keyword id="KW-0418">Kinase</keyword>
<keyword id="KW-0547">Nucleotide-binding</keyword>
<keyword id="KW-1185">Reference proteome</keyword>
<keyword id="KW-0808">Transferase</keyword>
<reference key="1">
    <citation type="journal article" date="1996" name="Science">
        <title>Complete genome sequence of the methanogenic archaeon, Methanococcus jannaschii.</title>
        <authorList>
            <person name="Bult C.J."/>
            <person name="White O."/>
            <person name="Olsen G.J."/>
            <person name="Zhou L."/>
            <person name="Fleischmann R.D."/>
            <person name="Sutton G.G."/>
            <person name="Blake J.A."/>
            <person name="FitzGerald L.M."/>
            <person name="Clayton R.A."/>
            <person name="Gocayne J.D."/>
            <person name="Kerlavage A.R."/>
            <person name="Dougherty B.A."/>
            <person name="Tomb J.-F."/>
            <person name="Adams M.D."/>
            <person name="Reich C.I."/>
            <person name="Overbeek R."/>
            <person name="Kirkness E.F."/>
            <person name="Weinstock K.G."/>
            <person name="Merrick J.M."/>
            <person name="Glodek A."/>
            <person name="Scott J.L."/>
            <person name="Geoghagen N.S.M."/>
            <person name="Weidman J.F."/>
            <person name="Fuhrmann J.L."/>
            <person name="Nguyen D."/>
            <person name="Utterback T.R."/>
            <person name="Kelley J.M."/>
            <person name="Peterson J.D."/>
            <person name="Sadow P.W."/>
            <person name="Hanna M.C."/>
            <person name="Cotton M.D."/>
            <person name="Roberts K.M."/>
            <person name="Hurst M.A."/>
            <person name="Kaine B.P."/>
            <person name="Borodovsky M."/>
            <person name="Klenk H.-P."/>
            <person name="Fraser C.M."/>
            <person name="Smith H.O."/>
            <person name="Woese C.R."/>
            <person name="Venter J.C."/>
        </authorList>
    </citation>
    <scope>NUCLEOTIDE SEQUENCE [LARGE SCALE GENOMIC DNA]</scope>
    <source>
        <strain>ATCC 43067 / DSM 2661 / JAL-1 / JCM 10045 / NBRC 100440</strain>
    </source>
</reference>
<reference key="2">
    <citation type="journal article" date="2005" name="Biochemistry">
        <title>Structural and functional investigation of a putative archaeal selenocysteine synthase.</title>
        <authorList>
            <person name="Kaiser J.T."/>
            <person name="Gromadski K."/>
            <person name="Rother M."/>
            <person name="Engelhardt H."/>
            <person name="Rodnina M.V."/>
            <person name="Wahl M.C."/>
        </authorList>
    </citation>
    <scope>FUNCTION</scope>
    <source>
        <strain>ATCC 43067 / DSM 2661 / JAL-1 / JCM 10045 / NBRC 100440</strain>
    </source>
</reference>
<name>PSTK_METJA</name>